<dbReference type="EMBL" id="AB000383">
    <property type="protein sequence ID" value="BAA19095.1"/>
    <property type="molecule type" value="Genomic_DNA"/>
</dbReference>
<dbReference type="SMR" id="P89518"/>
<dbReference type="GO" id="GO:0016020">
    <property type="term" value="C:membrane"/>
    <property type="evidence" value="ECO:0007669"/>
    <property type="project" value="UniProtKB-KW"/>
</dbReference>
<dbReference type="GO" id="GO:0019031">
    <property type="term" value="C:viral envelope"/>
    <property type="evidence" value="ECO:0007669"/>
    <property type="project" value="UniProtKB-KW"/>
</dbReference>
<dbReference type="GO" id="GO:0055036">
    <property type="term" value="C:virion membrane"/>
    <property type="evidence" value="ECO:0007669"/>
    <property type="project" value="UniProtKB-SubCell"/>
</dbReference>
<dbReference type="Gene3D" id="2.70.98.100">
    <property type="entry name" value="Baculovirus E66 occlusion-derived virus envelope protein, domain 2"/>
    <property type="match status" value="1"/>
</dbReference>
<dbReference type="Gene3D" id="1.50.10.100">
    <property type="entry name" value="Chondroitin AC/alginate lyase"/>
    <property type="match status" value="1"/>
</dbReference>
<dbReference type="InterPro" id="IPR043082">
    <property type="entry name" value="Baculo_ODV-E66_core"/>
</dbReference>
<dbReference type="InterPro" id="IPR008929">
    <property type="entry name" value="Chondroitin_lyas"/>
</dbReference>
<dbReference type="InterPro" id="IPR012970">
    <property type="entry name" value="Lyase_8_alpha_N"/>
</dbReference>
<dbReference type="InterPro" id="IPR006934">
    <property type="entry name" value="ODV-E66_C_baculovirus"/>
</dbReference>
<dbReference type="Pfam" id="PF04850">
    <property type="entry name" value="Baculo_E66"/>
    <property type="match status" value="1"/>
</dbReference>
<dbReference type="Pfam" id="PF08124">
    <property type="entry name" value="Lyase_8_N"/>
    <property type="match status" value="1"/>
</dbReference>
<dbReference type="SUPFAM" id="SSF48230">
    <property type="entry name" value="Chondroitin AC/alginate lyase"/>
    <property type="match status" value="1"/>
</dbReference>
<comment type="function">
    <text>Component of the polyhedra envelope.</text>
</comment>
<comment type="subcellular location">
    <subcellularLocation>
        <location evidence="1">Virion membrane</location>
    </subcellularLocation>
</comment>
<comment type="similarity">
    <text evidence="1">Belongs to the baculoviridae E66 family.</text>
</comment>
<protein>
    <recommendedName>
        <fullName>Occlusion-derived virus envelope protein E66</fullName>
        <shortName>ODV-E66</shortName>
    </recommendedName>
</protein>
<accession>P89518</accession>
<sequence length="631" mass="71179">MTVIDKNDLAVFEKYYLDTLQTTFLQKAEKVAHATRQFSDDGNIFVNMNTWSSAVDFGIVLHTLIGYGVRFNNRNDELYENEELAYGLYEAMHLIYEHLPDPAPTHSAPLGLIVPDWYHFSITMPECFQNTCIVLRDHYDLRELTESLLHYYLPLPTLSMGLWRTAGNAMRMCLPYCYGQLLRGYTFAEIGDETQVQYVLDLIKFPLVKSGNGIHYDYAYFDHTDVRAYGYLVNSYFTFSYYNFLFGEETVNMQNVYNSLSLIGSNQGIVNPGLLSRNGSNYSAVLAHLIEFVDGVFSGDFSKILTVRNNRYFGSVVGQSPDIAYYEADPNNSLHAPLWAMTRRIWSNTGRVLSYRSVGLESGILLTTNLNGVINVPTTGPSTSSFHPTLAYTALAATENAGGMAMHVRLAELNLEFHSYTLYHRYGMFHLYDKIRTLRHITNNARCVVLVRDNNNESRWTSASNLISPRITAKHHNIINNSSLSNFDVRTFDALNLSTAEQIISAELMNRGGGVTCFSLLAQDVAGNDNTTITRIPESNILVIATNSNSIQCVIDFPVVVLKDEETRQITINDATNISRNLHQLSIDKIVNVLSVLSLSVDSLILPANITRSANSFYLQNDHGNQFKFMY</sequence>
<name>OE66_NPVLS</name>
<feature type="chain" id="PRO_0000132932" description="Occlusion-derived virus envelope protein E66">
    <location>
        <begin position="1"/>
        <end position="631"/>
    </location>
</feature>
<proteinExistence type="inferred from homology"/>
<organism>
    <name type="scientific">Leucania separata nucleopolyhedrovirus</name>
    <name type="common">LsNPV</name>
    <dbReference type="NCBI Taxonomy" id="1307956"/>
    <lineage>
        <taxon>Viruses</taxon>
        <taxon>Viruses incertae sedis</taxon>
        <taxon>Naldaviricetes</taxon>
        <taxon>Lefavirales</taxon>
        <taxon>Baculoviridae</taxon>
        <taxon>Alphabaculovirus</taxon>
        <taxon>Alphabaculovirus leseparatae</taxon>
    </lineage>
</organism>
<organismHost>
    <name type="scientific">Lepidoptera</name>
    <name type="common">butterflies and moths</name>
    <dbReference type="NCBI Taxonomy" id="7088"/>
</organismHost>
<evidence type="ECO:0000305" key="1"/>
<keyword id="KW-0472">Membrane</keyword>
<keyword id="KW-0261">Viral envelope protein</keyword>
<keyword id="KW-0946">Virion</keyword>
<reference key="1">
    <citation type="submission" date="1997-01" db="EMBL/GenBank/DDBJ databases">
        <authorList>
            <person name="Jin T."/>
            <person name="Jin H."/>
            <person name="Qi Y."/>
            <person name="Huang Y."/>
        </authorList>
    </citation>
    <scope>NUCLEOTIDE SEQUENCE [GENOMIC DNA]</scope>
</reference>